<organism>
    <name type="scientific">Mus musculus</name>
    <name type="common">Mouse</name>
    <dbReference type="NCBI Taxonomy" id="10090"/>
    <lineage>
        <taxon>Eukaryota</taxon>
        <taxon>Metazoa</taxon>
        <taxon>Chordata</taxon>
        <taxon>Craniata</taxon>
        <taxon>Vertebrata</taxon>
        <taxon>Euteleostomi</taxon>
        <taxon>Mammalia</taxon>
        <taxon>Eutheria</taxon>
        <taxon>Euarchontoglires</taxon>
        <taxon>Glires</taxon>
        <taxon>Rodentia</taxon>
        <taxon>Myomorpha</taxon>
        <taxon>Muroidea</taxon>
        <taxon>Muridae</taxon>
        <taxon>Murinae</taxon>
        <taxon>Mus</taxon>
        <taxon>Mus</taxon>
    </lineage>
</organism>
<gene>
    <name evidence="10 14" type="primary">Padi6</name>
    <name evidence="12" type="synonym">Pad6</name>
    <name type="synonym">Padi5</name>
</gene>
<dbReference type="EMBL" id="AF529423">
    <property type="protein sequence ID" value="AAM94858.1"/>
    <property type="molecule type" value="mRNA"/>
</dbReference>
<dbReference type="EMBL" id="AB121692">
    <property type="protein sequence ID" value="BAD16628.1"/>
    <property type="molecule type" value="Genomic_DNA"/>
</dbReference>
<dbReference type="EMBL" id="BC053724">
    <property type="protein sequence ID" value="AAH53724.1"/>
    <property type="molecule type" value="mRNA"/>
</dbReference>
<dbReference type="CCDS" id="CCDS38936.1"/>
<dbReference type="RefSeq" id="NP_694746.2">
    <property type="nucleotide sequence ID" value="NM_153106.2"/>
</dbReference>
<dbReference type="SMR" id="Q8K3V4"/>
<dbReference type="FunCoup" id="Q8K3V4">
    <property type="interactions" value="16"/>
</dbReference>
<dbReference type="STRING" id="10090.ENSMUSP00000044044"/>
<dbReference type="GlyGen" id="Q8K3V4">
    <property type="glycosylation" value="1 site"/>
</dbReference>
<dbReference type="PhosphoSitePlus" id="Q8K3V4"/>
<dbReference type="REPRODUCTION-2DPAGE" id="Q8K3V4"/>
<dbReference type="PaxDb" id="10090-ENSMUSP00000044044"/>
<dbReference type="ProteomicsDB" id="287765"/>
<dbReference type="Antibodypedia" id="73123">
    <property type="antibodies" value="81 antibodies from 12 providers"/>
</dbReference>
<dbReference type="DNASU" id="242726"/>
<dbReference type="Ensembl" id="ENSMUST00000038749.11">
    <property type="protein sequence ID" value="ENSMUSP00000044044.5"/>
    <property type="gene ID" value="ENSMUSG00000040935.13"/>
</dbReference>
<dbReference type="GeneID" id="242726"/>
<dbReference type="KEGG" id="mmu:242726"/>
<dbReference type="UCSC" id="uc008vnc.1">
    <property type="organism name" value="mouse"/>
</dbReference>
<dbReference type="AGR" id="MGI:2655198"/>
<dbReference type="CTD" id="353238"/>
<dbReference type="MGI" id="MGI:2655198">
    <property type="gene designation" value="Padi6"/>
</dbReference>
<dbReference type="VEuPathDB" id="HostDB:ENSMUSG00000040935"/>
<dbReference type="eggNOG" id="ENOG502QVJA">
    <property type="taxonomic scope" value="Eukaryota"/>
</dbReference>
<dbReference type="GeneTree" id="ENSGT00940000153217"/>
<dbReference type="HOGENOM" id="CLU_021911_0_0_1"/>
<dbReference type="InParanoid" id="Q8K3V4"/>
<dbReference type="OMA" id="VAPCIFT"/>
<dbReference type="OrthoDB" id="5102063at2759"/>
<dbReference type="PhylomeDB" id="Q8K3V4"/>
<dbReference type="TreeFam" id="TF331952"/>
<dbReference type="BRENDA" id="3.5.3.15">
    <property type="organism ID" value="3474"/>
</dbReference>
<dbReference type="Reactome" id="R-MMU-3247509">
    <property type="pathway name" value="Chromatin modifying enzymes"/>
</dbReference>
<dbReference type="BioGRID-ORCS" id="242726">
    <property type="hits" value="3 hits in 76 CRISPR screens"/>
</dbReference>
<dbReference type="ChiTaRS" id="Padi6">
    <property type="organism name" value="mouse"/>
</dbReference>
<dbReference type="PRO" id="PR:Q8K3V4"/>
<dbReference type="Proteomes" id="UP000000589">
    <property type="component" value="Chromosome 4"/>
</dbReference>
<dbReference type="RNAct" id="Q8K3V4">
    <property type="molecule type" value="protein"/>
</dbReference>
<dbReference type="Bgee" id="ENSMUSG00000040935">
    <property type="expression patterns" value="Expressed in primary oocyte and 22 other cell types or tissues"/>
</dbReference>
<dbReference type="ExpressionAtlas" id="Q8K3V4">
    <property type="expression patterns" value="baseline and differential"/>
</dbReference>
<dbReference type="GO" id="GO:0060473">
    <property type="term" value="C:cortical granule"/>
    <property type="evidence" value="ECO:0000314"/>
    <property type="project" value="UniProtKB"/>
</dbReference>
<dbReference type="GO" id="GO:0005737">
    <property type="term" value="C:cytoplasm"/>
    <property type="evidence" value="ECO:0000314"/>
    <property type="project" value="MGI"/>
</dbReference>
<dbReference type="GO" id="GO:0140095">
    <property type="term" value="C:cytoplasmic lattice"/>
    <property type="evidence" value="ECO:0000314"/>
    <property type="project" value="UniProtKB"/>
</dbReference>
<dbReference type="GO" id="GO:0045111">
    <property type="term" value="C:intermediate filament cytoskeleton"/>
    <property type="evidence" value="ECO:0000314"/>
    <property type="project" value="MGI"/>
</dbReference>
<dbReference type="GO" id="GO:0005634">
    <property type="term" value="C:nucleus"/>
    <property type="evidence" value="ECO:0007669"/>
    <property type="project" value="UniProtKB-SubCell"/>
</dbReference>
<dbReference type="GO" id="GO:1990917">
    <property type="term" value="C:ooplasm"/>
    <property type="evidence" value="ECO:0000314"/>
    <property type="project" value="UniProtKB"/>
</dbReference>
<dbReference type="GO" id="GO:0005509">
    <property type="term" value="F:calcium ion binding"/>
    <property type="evidence" value="ECO:0007669"/>
    <property type="project" value="InterPro"/>
</dbReference>
<dbReference type="GO" id="GO:0042802">
    <property type="term" value="F:identical protein binding"/>
    <property type="evidence" value="ECO:0000250"/>
    <property type="project" value="UniProtKB"/>
</dbReference>
<dbReference type="GO" id="GO:0140094">
    <property type="term" value="F:structural constituent of cytoplasmic lattice"/>
    <property type="evidence" value="ECO:0000314"/>
    <property type="project" value="UniProtKB"/>
</dbReference>
<dbReference type="GO" id="GO:0015631">
    <property type="term" value="F:tubulin binding"/>
    <property type="evidence" value="ECO:0000314"/>
    <property type="project" value="UniProtKB"/>
</dbReference>
<dbReference type="GO" id="GO:0007028">
    <property type="term" value="P:cytoplasm organization"/>
    <property type="evidence" value="ECO:0000315"/>
    <property type="project" value="MGI"/>
</dbReference>
<dbReference type="GO" id="GO:0007010">
    <property type="term" value="P:cytoskeleton organization"/>
    <property type="evidence" value="ECO:0000315"/>
    <property type="project" value="MGI"/>
</dbReference>
<dbReference type="GO" id="GO:0040016">
    <property type="term" value="P:embryonic cleavage"/>
    <property type="evidence" value="ECO:0000314"/>
    <property type="project" value="UniProtKB"/>
</dbReference>
<dbReference type="GO" id="GO:0044725">
    <property type="term" value="P:epigenetic programming in the zygotic pronuclei"/>
    <property type="evidence" value="ECO:0000314"/>
    <property type="project" value="UniProtKB"/>
</dbReference>
<dbReference type="GO" id="GO:0001701">
    <property type="term" value="P:in utero embryonic development"/>
    <property type="evidence" value="ECO:0000315"/>
    <property type="project" value="MGI"/>
</dbReference>
<dbReference type="GO" id="GO:0008104">
    <property type="term" value="P:protein localization"/>
    <property type="evidence" value="ECO:0000315"/>
    <property type="project" value="MGI"/>
</dbReference>
<dbReference type="GO" id="GO:0140089">
    <property type="term" value="P:protein storage"/>
    <property type="evidence" value="ECO:0000314"/>
    <property type="project" value="UniProtKB"/>
</dbReference>
<dbReference type="GO" id="GO:0043143">
    <property type="term" value="P:regulation of translation by machinery localization"/>
    <property type="evidence" value="ECO:0000315"/>
    <property type="project" value="MGI"/>
</dbReference>
<dbReference type="FunFam" id="2.60.40.1700:FF:000002">
    <property type="entry name" value="Peptidyl arginine deiminase 6"/>
    <property type="match status" value="1"/>
</dbReference>
<dbReference type="FunFam" id="3.75.10.10:FF:000003">
    <property type="entry name" value="Protein-arginine deiminase type-2"/>
    <property type="match status" value="1"/>
</dbReference>
<dbReference type="Gene3D" id="3.75.10.10">
    <property type="entry name" value="L-arginine/glycine Amidinotransferase, Chain A"/>
    <property type="match status" value="1"/>
</dbReference>
<dbReference type="Gene3D" id="2.60.40.1700">
    <property type="entry name" value="Protein-arginine deiminase, central domain"/>
    <property type="match status" value="1"/>
</dbReference>
<dbReference type="Gene3D" id="2.60.40.1860">
    <property type="entry name" value="Protein-arginine deiminase, N-terminal domain"/>
    <property type="match status" value="1"/>
</dbReference>
<dbReference type="InterPro" id="IPR008972">
    <property type="entry name" value="Cupredoxin"/>
</dbReference>
<dbReference type="InterPro" id="IPR004303">
    <property type="entry name" value="PAD"/>
</dbReference>
<dbReference type="InterPro" id="IPR013530">
    <property type="entry name" value="PAD_C"/>
</dbReference>
<dbReference type="InterPro" id="IPR036556">
    <property type="entry name" value="PAD_central_sf"/>
</dbReference>
<dbReference type="InterPro" id="IPR013732">
    <property type="entry name" value="PAD_N"/>
</dbReference>
<dbReference type="InterPro" id="IPR038685">
    <property type="entry name" value="PAD_N_sf"/>
</dbReference>
<dbReference type="InterPro" id="IPR013733">
    <property type="entry name" value="Prot_Arg_deaminase_cen_dom"/>
</dbReference>
<dbReference type="PANTHER" id="PTHR10837">
    <property type="entry name" value="PEPTIDYLARGININE DEIMINASE"/>
    <property type="match status" value="1"/>
</dbReference>
<dbReference type="PANTHER" id="PTHR10837:SF4">
    <property type="entry name" value="PROTEIN-ARGININE DEIMINASE TYPE-6"/>
    <property type="match status" value="1"/>
</dbReference>
<dbReference type="Pfam" id="PF03068">
    <property type="entry name" value="PAD"/>
    <property type="match status" value="1"/>
</dbReference>
<dbReference type="Pfam" id="PF08527">
    <property type="entry name" value="PAD_M"/>
    <property type="match status" value="1"/>
</dbReference>
<dbReference type="Pfam" id="PF08526">
    <property type="entry name" value="PAD_N"/>
    <property type="match status" value="1"/>
</dbReference>
<dbReference type="PIRSF" id="PIRSF001247">
    <property type="entry name" value="Protein-arginine_deiminase"/>
    <property type="match status" value="1"/>
</dbReference>
<dbReference type="SUPFAM" id="SSF49503">
    <property type="entry name" value="Cupredoxins"/>
    <property type="match status" value="1"/>
</dbReference>
<dbReference type="SUPFAM" id="SSF55909">
    <property type="entry name" value="Pentein"/>
    <property type="match status" value="1"/>
</dbReference>
<dbReference type="SUPFAM" id="SSF110083">
    <property type="entry name" value="Peptidylarginine deiminase Pad4, middle domain"/>
    <property type="match status" value="1"/>
</dbReference>
<accession>Q8K3V4</accession>
<accession>Q75WC6</accession>
<feature type="chain" id="PRO_0000220037" description="Inactive protein-arginine deiminase type-6">
    <location>
        <begin position="1"/>
        <end position="682"/>
    </location>
</feature>
<feature type="modified residue" description="Phosphoserine" evidence="1">
    <location>
        <position position="2"/>
    </location>
</feature>
<feature type="modified residue" description="Phosphoserine" evidence="1">
    <location>
        <position position="434"/>
    </location>
</feature>
<feature type="mutagenesis site" description="Embryos of female knockin mice stop development at the two-cell stage. Mutant oocytes display defects of epigenetic reprogramming and zygotic genome activation." evidence="9">
    <original>P</original>
    <variation>A</variation>
    <location>
        <position position="620"/>
    </location>
</feature>
<feature type="sequence conflict" description="In Ref. 3; AAH53724." evidence="13" ref="3">
    <original>T</original>
    <variation>A</variation>
    <location>
        <position position="63"/>
    </location>
</feature>
<feature type="sequence conflict" description="In Ref. 3; AAH53724." evidence="13" ref="3">
    <original>I</original>
    <variation>T</variation>
    <location>
        <position position="122"/>
    </location>
</feature>
<feature type="sequence conflict" description="In Ref. 1; AA sequence." evidence="13" ref="1">
    <original>N</original>
    <variation>NN</variation>
    <location>
        <position position="177"/>
    </location>
</feature>
<feature type="sequence conflict" description="In Ref. 1; AAM94858." evidence="13" ref="1">
    <original>T</original>
    <variation>I</variation>
    <location>
        <position position="393"/>
    </location>
</feature>
<reference key="1">
    <citation type="journal article" date="2003" name="Dev. Biol.">
        <title>ePAD, an oocyte and early embryo-abundant peptidylarginine deiminase-like protein that localizes to egg cytoplasmic sheets.</title>
        <authorList>
            <person name="Wright P.W."/>
            <person name="Bolling L.C."/>
            <person name="Calvert M.E."/>
            <person name="Sarmento O.F."/>
            <person name="Berkeley E.V."/>
            <person name="Shea M.C."/>
            <person name="Hao Z."/>
            <person name="Jayes F.C."/>
            <person name="Bush L.A."/>
            <person name="Shetty J."/>
            <person name="Shore A.N."/>
            <person name="Reddi P.P."/>
            <person name="Tung K.S."/>
            <person name="Samy E."/>
            <person name="Allietta M.M."/>
            <person name="Sherman N.E."/>
            <person name="Herr J.C."/>
            <person name="Coonrod S.A."/>
        </authorList>
    </citation>
    <scope>NUCLEOTIDE SEQUENCE</scope>
    <scope>PARTIAL PROTEIN SEQUENCE</scope>
    <scope>TISSUE SPECIFICITY</scope>
    <scope>DEVELOPMENTAL STAGE</scope>
    <scope>SUBCELLULAR LOCATION</scope>
    <source>
        <strain>ICR</strain>
        <tissue>Ovary</tissue>
    </source>
</reference>
<reference key="2">
    <citation type="journal article" date="2004" name="Gene">
        <title>Comparative analysis of the mouse and human peptidylarginine deiminase gene clusters reveals highly conserved non-coding segments and a new human gene, PADI6.</title>
        <authorList>
            <person name="Chavanas S."/>
            <person name="Mechin M.-C."/>
            <person name="Takahara H."/>
            <person name="Kawada A."/>
            <person name="Nachat R."/>
            <person name="Serre G."/>
            <person name="Simon M."/>
        </authorList>
    </citation>
    <scope>NUCLEOTIDE SEQUENCE [GENOMIC DNA]</scope>
    <source>
        <strain>129/SvJ</strain>
    </source>
</reference>
<reference key="3">
    <citation type="journal article" date="2004" name="Genome Res.">
        <title>The status, quality, and expansion of the NIH full-length cDNA project: the Mammalian Gene Collection (MGC).</title>
        <authorList>
            <consortium name="The MGC Project Team"/>
        </authorList>
    </citation>
    <scope>NUCLEOTIDE SEQUENCE [LARGE SCALE MRNA]</scope>
    <source>
        <strain>C57BL/6J</strain>
        <tissue>Egg</tissue>
    </source>
</reference>
<reference key="4">
    <citation type="journal article" date="2005" name="Reprod. Biol. Endocrinol.">
        <title>Peptidylarginine deiminase (PAD) is a mouse cortical granule protein that plays a role in preimplantation embryonic development.</title>
        <authorList>
            <person name="Liu M."/>
            <person name="Oh A."/>
            <person name="Calarco P."/>
            <person name="Yamada M."/>
            <person name="Coonrod S.A."/>
            <person name="Talbot P."/>
        </authorList>
    </citation>
    <scope>PROTEIN SEQUENCE OF 425-432</scope>
    <scope>SUBCELLULAR LOCATION</scope>
    <scope>FUNCTION</scope>
    <scope>TISSUE SPECIFICITY</scope>
</reference>
<reference key="5">
    <citation type="journal article" date="2007" name="Mol. Cell. Endocrinol.">
        <title>Peptidylarginine deiminase (PAD) 6 is essential for oocyte cytoskeletal sheet formation and female fertility.</title>
        <authorList>
            <person name="Esposito G."/>
            <person name="Vitale A.M."/>
            <person name="Leijten F.P."/>
            <person name="Strik A.M."/>
            <person name="Koonen-Reemst A.M."/>
            <person name="Yurttas P."/>
            <person name="Robben T.J."/>
            <person name="Coonrod S."/>
            <person name="Gossen J.A."/>
        </authorList>
    </citation>
    <scope>DISRUPTION PHENOTYPE</scope>
    <scope>FUNCTION</scope>
</reference>
<reference key="6">
    <citation type="journal article" date="2008" name="Development">
        <title>Role for PADI6 and the cytoplasmic lattices in ribosomal storage in oocytes and translational control in the early mouse embryo.</title>
        <authorList>
            <person name="Yurttas P."/>
            <person name="Vitale A.M."/>
            <person name="Fitzhenry R.J."/>
            <person name="Cohen-Gould L."/>
            <person name="Wu W."/>
            <person name="Gossen J.A."/>
            <person name="Coonrod S.A."/>
        </authorList>
    </citation>
    <scope>FUNCTION</scope>
    <scope>SUBCELLULAR LOCATION</scope>
    <scope>DISRUPTION PHENOTYPE</scope>
</reference>
<reference key="7">
    <citation type="journal article" date="2011" name="Dev. Biol.">
        <title>Regulation of mouse oocyte microtubule and organelle dynamics by PADI6 and the cytoplasmic lattices.</title>
        <authorList>
            <person name="Kan R."/>
            <person name="Yurttas P."/>
            <person name="Kim B."/>
            <person name="Jin M."/>
            <person name="Wo L."/>
            <person name="Lee B."/>
            <person name="Gosden R."/>
            <person name="Coonrod S.A."/>
        </authorList>
    </citation>
    <scope>SUBCELLULAR LOCATION</scope>
    <scope>TUBULIN-BINDING</scope>
</reference>
<reference key="8">
    <citation type="journal article" date="2017" name="Cell Cycle">
        <title>Role for PADI6 in securing the mRNA-MSY2 complex to the oocyte cytoplasmic lattices.</title>
        <authorList>
            <person name="Liu X."/>
            <person name="Morency E."/>
            <person name="Li T."/>
            <person name="Qin H."/>
            <person name="Zhang X."/>
            <person name="Zhang X."/>
            <person name="Coonrod S."/>
        </authorList>
    </citation>
    <scope>FUNCTION</scope>
    <scope>SUBCELLULAR LOCATION</scope>
</reference>
<reference key="9">
    <citation type="journal article" date="2023" name="Cell">
        <title>Mammalian oocytes store proteins for the early embryo on cytoplasmic lattices.</title>
        <authorList>
            <person name="Jentoft I.M.A."/>
            <person name="Baeuerlein F.J.B."/>
            <person name="Welp L.M."/>
            <person name="Cooper B.H."/>
            <person name="Petrovic A."/>
            <person name="So C."/>
            <person name="Penir S.M."/>
            <person name="Politi A.Z."/>
            <person name="Horokhovskyi Y."/>
            <person name="Takala I."/>
            <person name="Eckel H."/>
            <person name="Moltrecht R."/>
            <person name="Lenart P."/>
            <person name="Cavazza T."/>
            <person name="Liepe J."/>
            <person name="Brose N."/>
            <person name="Urlaub H."/>
            <person name="Fernandez-Busnadiego R."/>
            <person name="Schuh M."/>
        </authorList>
    </citation>
    <scope>FUNCTION</scope>
    <scope>SUBCELLULAR LOCATION</scope>
    <scope>DISRUPTION PHENOTYPE</scope>
</reference>
<reference key="10">
    <citation type="journal article" date="2024" name="Genes Dev.">
        <title>A maternal-effect Padi6 variant causes nuclear and cytoplasmic abnormalities in oocytes, as well as failure of epigenetic reprogramming and zygotic genome activation in embryos.</title>
        <authorList>
            <person name="Giaccari C."/>
            <person name="Cecere F."/>
            <person name="Argenziano L."/>
            <person name="Pagano A."/>
            <person name="Galvao A."/>
            <person name="Acampora D."/>
            <person name="Rossi G."/>
            <person name="Hay Mele B."/>
            <person name="Acurzio B."/>
            <person name="Coonrod S."/>
            <person name="Cubellis M.V."/>
            <person name="Cerrato F."/>
            <person name="Andrews S."/>
            <person name="Cecconi S."/>
            <person name="Kelsey G."/>
            <person name="Riccio A."/>
        </authorList>
    </citation>
    <scope>FUNCTION</scope>
    <scope>SUBCELLULAR LOCATION</scope>
    <scope>MUTAGENESIS OF PRO-620</scope>
</reference>
<sequence length="682" mass="76778">MSFQNSLSLSLVNPTHALCMVGMEITLDISKCAPDKCKSFTIRGSPRILIHISSSVIAGKEDTVVWRSMNHPTVALVRMVAPSPTVDEDKVLVSYFCPDQEVPTATAVLFLTGIEISLEADIYRDGQLDMPSDKQAKKKWMWGMNGWGAILLVNCSPNAVGQPDEQSFQEGPREIQNLSQMNVTVEGPTSILQNYQLILHTSEEEAKKTRVYWSQRGSSAYELVVGPNKPVYLLPTFENRRKEAFYVEATEFPSPSFSGLISLSLSLVEKAHDECIPEIPLYKDTVMFRVAPYIFMPSTQMPLEVYLCRELQLQGFVDSVTKLSEKSKVQVVKVYEDPNRQSKWLQDEMAFCYTQAPHKTVSLILDTPRVSKLEDFPMKYTLTPGSGYLIRQTEDHRVASLDSIGNLMVSPPVKAQGKDYPLGRVLIGGSFYPSSEGRDMNKGLREFVYAQQVQAPVELFSDWLMTGHMDQFMCFVPTNDKNNDQKDFRLLLASPSACFELFEQKQKEGYGNVTLFEDIGAEQLLSNGRESKTISQILADKSFREQNTYVEKCISLNRTLLKTELGLEDKDIILIPQLFCLEQLTNVPSNQQSTKLFARPYFPDMLQIIVLGKNLGIPKPFGPKINGTCCLEEKVCGLLEPLGLKCTFIDDFDCYLANIGDVCASAIINRVPFAFKWWKMTP</sequence>
<protein>
    <recommendedName>
        <fullName evidence="13">Inactive protein-arginine deiminase type-6</fullName>
    </recommendedName>
    <alternativeName>
        <fullName>Arginine deiminase-like protein</fullName>
    </alternativeName>
    <alternativeName>
        <fullName evidence="11">Egg and embryo abundant PAD</fullName>
        <shortName evidence="11">ePAD</shortName>
    </alternativeName>
    <alternativeName>
        <fullName evidence="11">P75</fullName>
    </alternativeName>
    <alternativeName>
        <fullName evidence="11">Peptidylarginine deiminase VI</fullName>
    </alternativeName>
    <alternativeName>
        <fullName>Protein-arginine deiminase type VI</fullName>
    </alternativeName>
    <alternativeName>
        <fullName>Protein-arginine deiminase type-6</fullName>
    </alternativeName>
</protein>
<keyword id="KW-0963">Cytoplasm</keyword>
<keyword id="KW-0968">Cytoplasmic vesicle</keyword>
<keyword id="KW-0903">Direct protein sequencing</keyword>
<keyword id="KW-0539">Nucleus</keyword>
<keyword id="KW-0597">Phosphoprotein</keyword>
<keyword id="KW-1185">Reference proteome</keyword>
<comment type="function">
    <text evidence="1 3 4 5 7 8 9">Structural constituent of cytoplasmic lattices, which plays a key role in early embryonic development (PubMed:16137333, PubMed:17587491, PubMed:18599511, PubMed:27929740, PubMed:37922900). Cytoplasmic lattices consist in fibrous structures found in the cytoplasm of oocytes and preimplantation embryos (PubMed:37922900). They are required to store maternal proteins critical for embryonic development, such as ribosomal proteins and proteins that control epigenetic reprogramming of the preimplantation embryo, and prevent their degradation or activation (PubMed:18599511, PubMed:37922900, PubMed:38453481). In contrast to other members of the family, does not show protein-arginine deiminase activity due to its inability to bind Ca(2+) (By similarity).</text>
</comment>
<comment type="subunit">
    <text evidence="1 6">Homodimers (By similarity). Associates with alpha-tubulin (PubMed:21147087).</text>
</comment>
<comment type="subcellular location">
    <subcellularLocation>
        <location evidence="2 5 6 7 8 9">Cytoplasm</location>
    </subcellularLocation>
    <subcellularLocation>
        <location evidence="2">Nucleus</location>
    </subcellularLocation>
    <subcellularLocation>
        <location evidence="3">Cytoplasmic vesicle</location>
        <location evidence="3">Secretory vesicle</location>
        <location evidence="3">Cortical granule</location>
    </subcellularLocation>
    <text evidence="3 5 6 7 8">Core component of cytoplasmic lattices in oocytes (PubMed:18599511, PubMed:21147087, PubMed:27929740, PubMed:37922900). Also nuclear (PubMed:16137333).</text>
</comment>
<comment type="tissue specificity">
    <text evidence="2 3">Expressed at very high levels in oocytes. Weakly expressed in testis. Expressed in primordial, primary, secondary and Graafian follicles, and in immature oocytes, mature eggs and blastocyst (at protein level).</text>
</comment>
<comment type="developmental stage">
    <text evidence="2 3">Detected in developing oocytes and early embryo. Detected in immature-germinal vesicle-stage oocytes, mature metaphase II arrested eggs and pronuclear zygotes, 2-cell, 4-cell and morula stages. Expression decreases in blastocyst stage.</text>
</comment>
<comment type="PTM">
    <text evidence="1">Phosphorylation at Ser-2, possibly by RSK-type kinases, and Ser-434 creates binding sites for 14-3-3 proteins.</text>
</comment>
<comment type="disruption phenotype">
    <text evidence="4 5 8">Female mice exhibit dispersal of the cytoskeletal sheets in oocytes that lead to a failure of zygotes to progress beyond the 2-cell stage and infertility (PubMed:17587491, PubMed:18599511). Oocytes are depleted of many proteins required for early development, such as ribosomal proteins and proteins that control epigenetic reprogramming of the preimplantation embryo (PubMed:18599511, PubMed:37922900). Male fertility is not affected: knockout animals are viable and present at the expected Mendelian ratio and do not exhibit any overt abnormalities (PubMed:17587491).</text>
</comment>
<comment type="similarity">
    <text evidence="13">Belongs to the protein arginine deiminase family.</text>
</comment>
<comment type="caution">
    <text evidence="1">In contrast to other members of the family, does not bind Ca(2+) and is inactive in in vitro assays against standard PADIs substrate (By similarity). At the structural level, the putative active site is in an unsuitable conformation for substrate binding inactive (By similarity).</text>
</comment>
<name>PADI6_MOUSE</name>
<evidence type="ECO:0000250" key="1">
    <source>
        <dbReference type="UniProtKB" id="Q6TGC4"/>
    </source>
</evidence>
<evidence type="ECO:0000269" key="2">
    <source>
    </source>
</evidence>
<evidence type="ECO:0000269" key="3">
    <source>
    </source>
</evidence>
<evidence type="ECO:0000269" key="4">
    <source>
    </source>
</evidence>
<evidence type="ECO:0000269" key="5">
    <source>
    </source>
</evidence>
<evidence type="ECO:0000269" key="6">
    <source>
    </source>
</evidence>
<evidence type="ECO:0000269" key="7">
    <source>
    </source>
</evidence>
<evidence type="ECO:0000269" key="8">
    <source>
    </source>
</evidence>
<evidence type="ECO:0000269" key="9">
    <source>
    </source>
</evidence>
<evidence type="ECO:0000303" key="10">
    <source>
    </source>
</evidence>
<evidence type="ECO:0000303" key="11">
    <source>
    </source>
</evidence>
<evidence type="ECO:0000303" key="12">
    <source>
    </source>
</evidence>
<evidence type="ECO:0000305" key="13"/>
<evidence type="ECO:0000312" key="14">
    <source>
        <dbReference type="MGI" id="MGI:2655198"/>
    </source>
</evidence>
<proteinExistence type="evidence at protein level"/>